<comment type="function">
    <text evidence="1">Dolichyl pyrophosphate Man9GlcNAc2 alpha-1,3-glucosyltransferase that operates in the biosynthetic pathway of dolichol-linked oligosaccharides, the glycan precursors employed in protein asparagine (N)-glycosylation. The assembly of dolichol-linked oligosaccharides begins on the cytosolic side of the endoplasmic reticulum membrane and finishes in its lumen. The sequential addition of sugars to dolichol pyrophosphate produces dolichol-linked oligosaccharides containing fourteen sugars, including two GlcNAcs, nine mannoses and three glucoses. Once assembled, the oligosaccharide is transferred from the lipid to nascent proteins by oligosaccharyltransferases. In the lumen of the endoplasmic reticulum, adds the first glucose residue from dolichyl phosphate glucose (Dol-P-Glc) onto the lipid-linked oligosaccharide intermediate Man(9)GlcNAc(2)-PP-Dol to produce Glc(1)Man(9)GlcNAc(2)-PP-Dol. Glc(1)Man(9)GlcNAc(2)-PP-Dol is a substrate for ALG8, the following enzyme in the biosynthetic pathway.</text>
</comment>
<comment type="catalytic activity">
    <reaction evidence="1">
        <text>an alpha-D-Man-(1-&gt;2)-alpha-D-Man-(1-&gt;2)-alpha-D-Man-(1-&gt;3)-[alpha-D-Man-(1-&gt;2)-alpha-D-Man-(1-&gt;3)-[alpha-D-Man-(1-&gt;2)-alpha-D-Man-(1-&gt;6)]-alpha-D-Man-(1-&gt;6)]-beta-D-Man-(1-&gt;4)-beta-D-GlcNAc-(1-&gt;4)-alpha-D-GlcNAc-diphospho-di-trans,poly-cis-dolichol + a di-trans,poly-cis-dolichyl beta-D-glucosyl phosphate = an alpha-D-Glc-(1-&gt;3)-alpha-D-Man-(1-&gt;2)-alpha-D-Man-(1-&gt;2)-alpha-D-Man-(1-&gt;3)-[alpha-D-Man-(1-&gt;2)-alpha-D-Man-(1-&gt;3)-[alpha-D-Man-(1-&gt;2)-alpha-D-Man-(1-&gt;6)]-alpha-D-Man-(1-&gt;6)]-beta-D-Man-(1-&gt;4)-beta-D-GlcNAc-(1-&gt;4)-alpha-D-GlcNAc-diphospho-di-trans,poly-cis-dolichol + a di-trans,poly-cis-dolichyl phosphate + H(+)</text>
        <dbReference type="Rhea" id="RHEA:30635"/>
        <dbReference type="Rhea" id="RHEA-COMP:19498"/>
        <dbReference type="Rhea" id="RHEA-COMP:19502"/>
        <dbReference type="Rhea" id="RHEA-COMP:19520"/>
        <dbReference type="Rhea" id="RHEA-COMP:19521"/>
        <dbReference type="ChEBI" id="CHEBI:15378"/>
        <dbReference type="ChEBI" id="CHEBI:57525"/>
        <dbReference type="ChEBI" id="CHEBI:57683"/>
        <dbReference type="ChEBI" id="CHEBI:132520"/>
        <dbReference type="ChEBI" id="CHEBI:132521"/>
        <dbReference type="EC" id="2.4.1.267"/>
    </reaction>
    <physiologicalReaction direction="left-to-right" evidence="1">
        <dbReference type="Rhea" id="RHEA:30636"/>
    </physiologicalReaction>
</comment>
<comment type="pathway">
    <text evidence="1">Protein modification; protein glycosylation.</text>
</comment>
<comment type="subcellular location">
    <subcellularLocation>
        <location evidence="1">Endoplasmic reticulum membrane</location>
        <topology evidence="2">Multi-pass membrane protein</topology>
    </subcellularLocation>
</comment>
<comment type="similarity">
    <text evidence="3">Belongs to the ALG6/ALG8 glucosyltransferase family.</text>
</comment>
<sequence>MEKWYLMTVVVLIGLTVRWTVSLNSYSGAGKPPMFGDYEAQRHWQEITFNLPVKQWYFNSSDNNLQYWGLDYPPPTAYHSLLCAYVAKFINPDWIALHTSRGYESQAHKLFMRTTVLIADLLIYIPAVVLYCCCLKEISTKKKIANALCILLYPGLILIDYGHFQYNSVSLGFALWGVLGISCDCDLLGSLAFCLAINYKQMELYHALPFFCFLLGKCFKKGLKGKGFVLLVKLACIVVASFVLCWLPFFTEREQTLQVLRRLFPVDRGLFEDKVANIWCSFNVFLKIKDILPRHIQLIMSFCFTFLSLLPACIKLILQPSSKGFKFTLVSCALSFFLFSFQVHEKSILLVSLPVCLVLSEIPFMSTWFLLVSTFSMLPLLLKDELLMPSVVTTMAFFIACVTSFSIFEKTSEEELQLKSFSISVRKYLPCFTFLSRIIQYLFLISVITMVLLTLMTVTLGPPQKLPDLFSVLVCFVSCLNFLFFLVYFNIIIVWDSKSGRNQKKIS</sequence>
<feature type="chain" id="PRO_0000284131" description="Dolichyl pyrophosphate Man9GlcNAc2 alpha-1,3-glucosyltransferase">
    <location>
        <begin position="1"/>
        <end position="507"/>
    </location>
</feature>
<feature type="topological domain" description="Cytoplasmic" evidence="3">
    <location>
        <begin position="1"/>
        <end position="3"/>
    </location>
</feature>
<feature type="transmembrane region" description="Helical" evidence="2">
    <location>
        <begin position="4"/>
        <end position="24"/>
    </location>
</feature>
<feature type="topological domain" description="Lumenal" evidence="3">
    <location>
        <begin position="25"/>
        <end position="114"/>
    </location>
</feature>
<feature type="transmembrane region" description="Helical" evidence="2">
    <location>
        <begin position="115"/>
        <end position="135"/>
    </location>
</feature>
<feature type="topological domain" description="Cytoplasmic" evidence="3">
    <location>
        <begin position="136"/>
        <end position="143"/>
    </location>
</feature>
<feature type="transmembrane region" description="Helical" evidence="2">
    <location>
        <begin position="144"/>
        <end position="164"/>
    </location>
</feature>
<feature type="topological domain" description="Lumenal" evidence="3">
    <location>
        <begin position="165"/>
        <end position="172"/>
    </location>
</feature>
<feature type="transmembrane region" description="Helical" evidence="2">
    <location>
        <begin position="173"/>
        <end position="193"/>
    </location>
</feature>
<feature type="topological domain" description="Cytoplasmic" evidence="3">
    <location>
        <begin position="194"/>
        <end position="226"/>
    </location>
</feature>
<feature type="transmembrane region" description="Helical" evidence="2">
    <location>
        <begin position="227"/>
        <end position="247"/>
    </location>
</feature>
<feature type="topological domain" description="Lumenal" evidence="3">
    <location>
        <begin position="248"/>
        <end position="297"/>
    </location>
</feature>
<feature type="transmembrane region" description="Helical" evidence="2">
    <location>
        <begin position="298"/>
        <end position="318"/>
    </location>
</feature>
<feature type="topological domain" description="Cytoplasmic" evidence="3">
    <location>
        <begin position="319"/>
        <end position="323"/>
    </location>
</feature>
<feature type="transmembrane region" description="Helical" evidence="2">
    <location>
        <begin position="324"/>
        <end position="344"/>
    </location>
</feature>
<feature type="topological domain" description="Lumenal" evidence="3">
    <location>
        <begin position="345"/>
        <end position="361"/>
    </location>
</feature>
<feature type="transmembrane region" description="Helical" evidence="2">
    <location>
        <begin position="362"/>
        <end position="382"/>
    </location>
</feature>
<feature type="topological domain" description="Cytoplasmic" evidence="3">
    <location>
        <begin position="383"/>
        <end position="387"/>
    </location>
</feature>
<feature type="transmembrane region" description="Helical" evidence="2">
    <location>
        <begin position="388"/>
        <end position="408"/>
    </location>
</feature>
<feature type="topological domain" description="Lumenal" evidence="3">
    <location>
        <begin position="409"/>
        <end position="437"/>
    </location>
</feature>
<feature type="transmembrane region" description="Helical" evidence="2">
    <location>
        <begin position="438"/>
        <end position="458"/>
    </location>
</feature>
<feature type="topological domain" description="Cytoplasmic" evidence="3">
    <location>
        <begin position="459"/>
        <end position="473"/>
    </location>
</feature>
<feature type="transmembrane region" description="Helical" evidence="2">
    <location>
        <begin position="474"/>
        <end position="494"/>
    </location>
</feature>
<feature type="topological domain" description="Lumenal" evidence="3">
    <location>
        <begin position="495"/>
        <end position="507"/>
    </location>
</feature>
<feature type="glycosylation site" description="N-linked (GlcNAc...) asparagine" evidence="2">
    <location>
        <position position="59"/>
    </location>
</feature>
<dbReference type="EC" id="2.4.1.267" evidence="1"/>
<dbReference type="EMBL" id="CR925922">
    <property type="protein sequence ID" value="CAI29585.1"/>
    <property type="molecule type" value="mRNA"/>
</dbReference>
<dbReference type="RefSeq" id="NP_001127060.1">
    <property type="nucleotide sequence ID" value="NM_001133588.2"/>
</dbReference>
<dbReference type="SMR" id="Q5NVS8"/>
<dbReference type="FunCoup" id="Q5NVS8">
    <property type="interactions" value="2160"/>
</dbReference>
<dbReference type="STRING" id="9601.ENSPPYP00000001490"/>
<dbReference type="CAZy" id="GT57">
    <property type="family name" value="Glycosyltransferase Family 57"/>
</dbReference>
<dbReference type="GeneID" id="100174089"/>
<dbReference type="KEGG" id="pon:100174089"/>
<dbReference type="CTD" id="29929"/>
<dbReference type="eggNOG" id="KOG2575">
    <property type="taxonomic scope" value="Eukaryota"/>
</dbReference>
<dbReference type="InParanoid" id="Q5NVS8"/>
<dbReference type="OrthoDB" id="4983at2759"/>
<dbReference type="UniPathway" id="UPA00378"/>
<dbReference type="Proteomes" id="UP000001595">
    <property type="component" value="Unplaced"/>
</dbReference>
<dbReference type="GO" id="GO:0005789">
    <property type="term" value="C:endoplasmic reticulum membrane"/>
    <property type="evidence" value="ECO:0007669"/>
    <property type="project" value="UniProtKB-SubCell"/>
</dbReference>
<dbReference type="GO" id="GO:0042281">
    <property type="term" value="F:dolichyl pyrophosphate Man9GlcNAc2 alpha-1,3-glucosyltransferase activity"/>
    <property type="evidence" value="ECO:0000250"/>
    <property type="project" value="UniProtKB"/>
</dbReference>
<dbReference type="GO" id="GO:0006488">
    <property type="term" value="P:dolichol-linked oligosaccharide biosynthetic process"/>
    <property type="evidence" value="ECO:0000250"/>
    <property type="project" value="UniProtKB"/>
</dbReference>
<dbReference type="GO" id="GO:0006487">
    <property type="term" value="P:protein N-linked glycosylation"/>
    <property type="evidence" value="ECO:0000250"/>
    <property type="project" value="UniProtKB"/>
</dbReference>
<dbReference type="InterPro" id="IPR004856">
    <property type="entry name" value="Glyco_trans_ALG6/ALG8"/>
</dbReference>
<dbReference type="PANTHER" id="PTHR12413">
    <property type="entry name" value="DOLICHYL GLYCOSYLTRANSFERASE"/>
    <property type="match status" value="1"/>
</dbReference>
<dbReference type="PANTHER" id="PTHR12413:SF1">
    <property type="entry name" value="DOLICHYL PYROPHOSPHATE MAN9GLCNAC2 ALPHA-1,3-GLUCOSYLTRANSFERASE"/>
    <property type="match status" value="1"/>
</dbReference>
<dbReference type="Pfam" id="PF03155">
    <property type="entry name" value="Alg6_Alg8"/>
    <property type="match status" value="1"/>
</dbReference>
<protein>
    <recommendedName>
        <fullName evidence="1">Dolichyl pyrophosphate Man9GlcNAc2 alpha-1,3-glucosyltransferase</fullName>
        <ecNumber evidence="1">2.4.1.267</ecNumber>
    </recommendedName>
    <alternativeName>
        <fullName evidence="1">Asparagine-linked glycosylation protein 6 homolog</fullName>
    </alternativeName>
    <alternativeName>
        <fullName>Dol-P-Glc:Man(9)GlcNAc(2)-PP-Dol alpha-1,3-glucosyltransferase</fullName>
    </alternativeName>
    <alternativeName>
        <fullName>Dolichyl-P-Glc:Man9GlcNAc2-PP-dolichyl glucosyltransferase</fullName>
    </alternativeName>
</protein>
<proteinExistence type="evidence at transcript level"/>
<reference key="1">
    <citation type="submission" date="2004-11" db="EMBL/GenBank/DDBJ databases">
        <authorList>
            <consortium name="The German cDNA consortium"/>
        </authorList>
    </citation>
    <scope>NUCLEOTIDE SEQUENCE [LARGE SCALE MRNA]</scope>
    <source>
        <tissue>Heart</tissue>
    </source>
</reference>
<keyword id="KW-0256">Endoplasmic reticulum</keyword>
<keyword id="KW-0325">Glycoprotein</keyword>
<keyword id="KW-0328">Glycosyltransferase</keyword>
<keyword id="KW-0472">Membrane</keyword>
<keyword id="KW-1185">Reference proteome</keyword>
<keyword id="KW-0808">Transferase</keyword>
<keyword id="KW-0812">Transmembrane</keyword>
<keyword id="KW-1133">Transmembrane helix</keyword>
<gene>
    <name evidence="1" type="primary">ALG6</name>
</gene>
<evidence type="ECO:0000250" key="1">
    <source>
        <dbReference type="UniProtKB" id="Q9Y672"/>
    </source>
</evidence>
<evidence type="ECO:0000255" key="2"/>
<evidence type="ECO:0000305" key="3"/>
<accession>Q5NVS8</accession>
<name>ALG6_PONAB</name>
<organism>
    <name type="scientific">Pongo abelii</name>
    <name type="common">Sumatran orangutan</name>
    <name type="synonym">Pongo pygmaeus abelii</name>
    <dbReference type="NCBI Taxonomy" id="9601"/>
    <lineage>
        <taxon>Eukaryota</taxon>
        <taxon>Metazoa</taxon>
        <taxon>Chordata</taxon>
        <taxon>Craniata</taxon>
        <taxon>Vertebrata</taxon>
        <taxon>Euteleostomi</taxon>
        <taxon>Mammalia</taxon>
        <taxon>Eutheria</taxon>
        <taxon>Euarchontoglires</taxon>
        <taxon>Primates</taxon>
        <taxon>Haplorrhini</taxon>
        <taxon>Catarrhini</taxon>
        <taxon>Hominidae</taxon>
        <taxon>Pongo</taxon>
    </lineage>
</organism>